<reference key="1">
    <citation type="journal article" date="2002" name="Proc. Natl. Acad. Sci. U.S.A.">
        <title>Genome sequence of a serotype M3 strain of group A Streptococcus: phage-encoded toxins, the high-virulence phenotype, and clone emergence.</title>
        <authorList>
            <person name="Beres S.B."/>
            <person name="Sylva G.L."/>
            <person name="Barbian K.D."/>
            <person name="Lei B."/>
            <person name="Hoff J.S."/>
            <person name="Mammarella N.D."/>
            <person name="Liu M.-Y."/>
            <person name="Smoot J.C."/>
            <person name="Porcella S.F."/>
            <person name="Parkins L.D."/>
            <person name="Campbell D.S."/>
            <person name="Smith T.M."/>
            <person name="McCormick J.K."/>
            <person name="Leung D.Y.M."/>
            <person name="Schlievert P.M."/>
            <person name="Musser J.M."/>
        </authorList>
    </citation>
    <scope>NUCLEOTIDE SEQUENCE [LARGE SCALE GENOMIC DNA]</scope>
    <source>
        <strain>ATCC BAA-595 / MGAS315</strain>
    </source>
</reference>
<proteinExistence type="inferred from homology"/>
<evidence type="ECO:0000255" key="1">
    <source>
        <dbReference type="HAMAP-Rule" id="MF_01382"/>
    </source>
</evidence>
<evidence type="ECO:0000256" key="2">
    <source>
        <dbReference type="SAM" id="MobiDB-lite"/>
    </source>
</evidence>
<keyword id="KW-0067">ATP-binding</keyword>
<keyword id="KW-1003">Cell membrane</keyword>
<keyword id="KW-0963">Cytoplasm</keyword>
<keyword id="KW-0472">Membrane</keyword>
<keyword id="KW-0479">Metal-binding</keyword>
<keyword id="KW-0547">Nucleotide-binding</keyword>
<keyword id="KW-0653">Protein transport</keyword>
<keyword id="KW-1278">Translocase</keyword>
<keyword id="KW-0811">Translocation</keyword>
<keyword id="KW-0813">Transport</keyword>
<keyword id="KW-0862">Zinc</keyword>
<feature type="chain" id="PRO_0000318452" description="Protein translocase subunit SecA">
    <location>
        <begin position="1"/>
        <end position="839"/>
    </location>
</feature>
<feature type="region of interest" description="Disordered" evidence="2">
    <location>
        <begin position="780"/>
        <end position="839"/>
    </location>
</feature>
<feature type="compositionally biased region" description="Basic and acidic residues" evidence="2">
    <location>
        <begin position="780"/>
        <end position="790"/>
    </location>
</feature>
<feature type="compositionally biased region" description="Polar residues" evidence="2">
    <location>
        <begin position="791"/>
        <end position="809"/>
    </location>
</feature>
<feature type="compositionally biased region" description="Basic residues" evidence="2">
    <location>
        <begin position="827"/>
        <end position="839"/>
    </location>
</feature>
<feature type="binding site" evidence="1">
    <location>
        <position position="85"/>
    </location>
    <ligand>
        <name>ATP</name>
        <dbReference type="ChEBI" id="CHEBI:30616"/>
    </ligand>
</feature>
<feature type="binding site" evidence="1">
    <location>
        <begin position="103"/>
        <end position="107"/>
    </location>
    <ligand>
        <name>ATP</name>
        <dbReference type="ChEBI" id="CHEBI:30616"/>
    </ligand>
</feature>
<feature type="binding site" evidence="1">
    <location>
        <position position="493"/>
    </location>
    <ligand>
        <name>ATP</name>
        <dbReference type="ChEBI" id="CHEBI:30616"/>
    </ligand>
</feature>
<feature type="binding site" evidence="1">
    <location>
        <position position="821"/>
    </location>
    <ligand>
        <name>Zn(2+)</name>
        <dbReference type="ChEBI" id="CHEBI:29105"/>
    </ligand>
</feature>
<feature type="binding site" evidence="1">
    <location>
        <position position="823"/>
    </location>
    <ligand>
        <name>Zn(2+)</name>
        <dbReference type="ChEBI" id="CHEBI:29105"/>
    </ligand>
</feature>
<feature type="binding site" evidence="1">
    <location>
        <position position="832"/>
    </location>
    <ligand>
        <name>Zn(2+)</name>
        <dbReference type="ChEBI" id="CHEBI:29105"/>
    </ligand>
</feature>
<feature type="binding site" evidence="1">
    <location>
        <position position="833"/>
    </location>
    <ligand>
        <name>Zn(2+)</name>
        <dbReference type="ChEBI" id="CHEBI:29105"/>
    </ligand>
</feature>
<accession>P0DF66</accession>
<accession>Q79YE2</accession>
<accession>Q8K5Z7</accession>
<organism>
    <name type="scientific">Streptococcus pyogenes serotype M3 (strain ATCC BAA-595 / MGAS315)</name>
    <dbReference type="NCBI Taxonomy" id="198466"/>
    <lineage>
        <taxon>Bacteria</taxon>
        <taxon>Bacillati</taxon>
        <taxon>Bacillota</taxon>
        <taxon>Bacilli</taxon>
        <taxon>Lactobacillales</taxon>
        <taxon>Streptococcaceae</taxon>
        <taxon>Streptococcus</taxon>
    </lineage>
</organism>
<sequence>MANILRKVIENDKGELRKLEKIAKKVESYADQMASLSDRDLQGKTLEFKERYQKGETLEQLLPEAFAVVREAAKRVLGLFPYRVQIMGGIVLHNGDVPEMRTGEGKTLTATMPVYLNAIAGEGVHVITVNEYLSTRDATEMGEVYSWLGLSVGINLAAKSPAEKREAYNCDITYSTNSEVGFDYLRDNMVVRQEDMVQRPLNFALVDEVDSVLIDEARTPLIVSGAVSSETNQLYIRADMFVKTLTSVDYVIDVPTKTIGLSDSGIDKAESYFNLSNLYDIENVALTHFIDNALRANYIMLLDIDYVVSEDGEILIVDQFTGRTMEGRRFSDGLHQAIEAKEGVRIQEESKTSASITYQNMFRMYKKLAGMTGTAKTEEEEFREVYNMRIIPIPTNRPIARIDHTDLLYPTLESKFRAVVEDVKTRHAKGQPILVGTVAVETSDLISRKLVEAGIPHEVLNAKNHFKEAQIIMNAGQRGAVTIATNMAGRGTDIKLGEGVRELGGLCVIGTERHESRRIDNQLRGRSGRQGDPGESQFYLSLEDDLMRRFGSDRIKAFLDRMKLDEEDTVIKSGMLGRQVESAQKRVEGNNYDTRKQVLQYDDVMREQREIIYANRRDVITANRDLGPEIKAMIKRTIDRAVDAHARSNRKDAVDAIVTFARTSLVPEESISAKELRGLKDEQIKEKLYQRALAIYDQQLSKLRDQEAIIEFQKVLILMIVDNKWTEHIDALDQLRNAVGLRGYAQNNPVVEYQAEGFKMFQDMIGAIEFDVTRTMMKAQIHEQERERASQRATTAAPQNIQSQQSANTDDLPKVERNEACPCGSGKKFKNCHGRKSFS</sequence>
<dbReference type="EC" id="7.4.2.8" evidence="1"/>
<dbReference type="EMBL" id="AE014074">
    <property type="protein sequence ID" value="AAM80172.1"/>
    <property type="molecule type" value="Genomic_DNA"/>
</dbReference>
<dbReference type="RefSeq" id="WP_002983193.1">
    <property type="nucleotide sequence ID" value="NC_004070.1"/>
</dbReference>
<dbReference type="SMR" id="P0DF66"/>
<dbReference type="KEGG" id="spg:SpyM3_1565"/>
<dbReference type="HOGENOM" id="CLU_005314_3_0_9"/>
<dbReference type="Proteomes" id="UP000000564">
    <property type="component" value="Chromosome"/>
</dbReference>
<dbReference type="GO" id="GO:0031522">
    <property type="term" value="C:cell envelope Sec protein transport complex"/>
    <property type="evidence" value="ECO:0007669"/>
    <property type="project" value="TreeGrafter"/>
</dbReference>
<dbReference type="GO" id="GO:0005829">
    <property type="term" value="C:cytosol"/>
    <property type="evidence" value="ECO:0007669"/>
    <property type="project" value="TreeGrafter"/>
</dbReference>
<dbReference type="GO" id="GO:0005886">
    <property type="term" value="C:plasma membrane"/>
    <property type="evidence" value="ECO:0007669"/>
    <property type="project" value="UniProtKB-SubCell"/>
</dbReference>
<dbReference type="GO" id="GO:0005524">
    <property type="term" value="F:ATP binding"/>
    <property type="evidence" value="ECO:0007669"/>
    <property type="project" value="UniProtKB-UniRule"/>
</dbReference>
<dbReference type="GO" id="GO:0046872">
    <property type="term" value="F:metal ion binding"/>
    <property type="evidence" value="ECO:0007669"/>
    <property type="project" value="UniProtKB-KW"/>
</dbReference>
<dbReference type="GO" id="GO:0008564">
    <property type="term" value="F:protein-exporting ATPase activity"/>
    <property type="evidence" value="ECO:0007669"/>
    <property type="project" value="UniProtKB-EC"/>
</dbReference>
<dbReference type="GO" id="GO:0065002">
    <property type="term" value="P:intracellular protein transmembrane transport"/>
    <property type="evidence" value="ECO:0007669"/>
    <property type="project" value="UniProtKB-UniRule"/>
</dbReference>
<dbReference type="GO" id="GO:0017038">
    <property type="term" value="P:protein import"/>
    <property type="evidence" value="ECO:0007669"/>
    <property type="project" value="InterPro"/>
</dbReference>
<dbReference type="GO" id="GO:0006605">
    <property type="term" value="P:protein targeting"/>
    <property type="evidence" value="ECO:0007669"/>
    <property type="project" value="UniProtKB-UniRule"/>
</dbReference>
<dbReference type="GO" id="GO:0043952">
    <property type="term" value="P:protein transport by the Sec complex"/>
    <property type="evidence" value="ECO:0007669"/>
    <property type="project" value="TreeGrafter"/>
</dbReference>
<dbReference type="CDD" id="cd17928">
    <property type="entry name" value="DEXDc_SecA"/>
    <property type="match status" value="1"/>
</dbReference>
<dbReference type="CDD" id="cd18803">
    <property type="entry name" value="SF2_C_secA"/>
    <property type="match status" value="1"/>
</dbReference>
<dbReference type="FunFam" id="1.10.3060.10:FF:000002">
    <property type="entry name" value="Preprotein translocase subunit SecA"/>
    <property type="match status" value="1"/>
</dbReference>
<dbReference type="FunFam" id="3.40.50.300:FF:000429">
    <property type="entry name" value="Preprotein translocase subunit SecA"/>
    <property type="match status" value="1"/>
</dbReference>
<dbReference type="FunFam" id="3.90.1440.10:FF:000001">
    <property type="entry name" value="Preprotein translocase subunit SecA"/>
    <property type="match status" value="1"/>
</dbReference>
<dbReference type="Gene3D" id="1.10.3060.10">
    <property type="entry name" value="Helical scaffold and wing domains of SecA"/>
    <property type="match status" value="1"/>
</dbReference>
<dbReference type="Gene3D" id="3.40.50.300">
    <property type="entry name" value="P-loop containing nucleotide triphosphate hydrolases"/>
    <property type="match status" value="3"/>
</dbReference>
<dbReference type="Gene3D" id="3.90.1440.10">
    <property type="entry name" value="SecA, preprotein cross-linking domain"/>
    <property type="match status" value="1"/>
</dbReference>
<dbReference type="HAMAP" id="MF_01382">
    <property type="entry name" value="SecA"/>
    <property type="match status" value="1"/>
</dbReference>
<dbReference type="InterPro" id="IPR014001">
    <property type="entry name" value="Helicase_ATP-bd"/>
</dbReference>
<dbReference type="InterPro" id="IPR001650">
    <property type="entry name" value="Helicase_C-like"/>
</dbReference>
<dbReference type="InterPro" id="IPR027417">
    <property type="entry name" value="P-loop_NTPase"/>
</dbReference>
<dbReference type="InterPro" id="IPR004027">
    <property type="entry name" value="SEC_C_motif"/>
</dbReference>
<dbReference type="InterPro" id="IPR000185">
    <property type="entry name" value="SecA"/>
</dbReference>
<dbReference type="InterPro" id="IPR020937">
    <property type="entry name" value="SecA_CS"/>
</dbReference>
<dbReference type="InterPro" id="IPR011115">
    <property type="entry name" value="SecA_DEAD"/>
</dbReference>
<dbReference type="InterPro" id="IPR014018">
    <property type="entry name" value="SecA_motor_DEAD"/>
</dbReference>
<dbReference type="InterPro" id="IPR011130">
    <property type="entry name" value="SecA_preprotein_X-link_dom"/>
</dbReference>
<dbReference type="InterPro" id="IPR044722">
    <property type="entry name" value="SecA_SF2_C"/>
</dbReference>
<dbReference type="InterPro" id="IPR011116">
    <property type="entry name" value="SecA_Wing/Scaffold"/>
</dbReference>
<dbReference type="InterPro" id="IPR036266">
    <property type="entry name" value="SecA_Wing/Scaffold_sf"/>
</dbReference>
<dbReference type="InterPro" id="IPR036670">
    <property type="entry name" value="SecA_X-link_sf"/>
</dbReference>
<dbReference type="NCBIfam" id="NF006630">
    <property type="entry name" value="PRK09200.1"/>
    <property type="match status" value="1"/>
</dbReference>
<dbReference type="NCBIfam" id="TIGR00963">
    <property type="entry name" value="secA"/>
    <property type="match status" value="1"/>
</dbReference>
<dbReference type="PANTHER" id="PTHR30612:SF0">
    <property type="entry name" value="CHLOROPLAST PROTEIN-TRANSPORTING ATPASE"/>
    <property type="match status" value="1"/>
</dbReference>
<dbReference type="PANTHER" id="PTHR30612">
    <property type="entry name" value="SECA INNER MEMBRANE COMPONENT OF SEC PROTEIN SECRETION SYSTEM"/>
    <property type="match status" value="1"/>
</dbReference>
<dbReference type="Pfam" id="PF21090">
    <property type="entry name" value="P-loop_SecA"/>
    <property type="match status" value="2"/>
</dbReference>
<dbReference type="Pfam" id="PF02810">
    <property type="entry name" value="SEC-C"/>
    <property type="match status" value="1"/>
</dbReference>
<dbReference type="Pfam" id="PF07517">
    <property type="entry name" value="SecA_DEAD"/>
    <property type="match status" value="1"/>
</dbReference>
<dbReference type="Pfam" id="PF01043">
    <property type="entry name" value="SecA_PP_bind"/>
    <property type="match status" value="1"/>
</dbReference>
<dbReference type="Pfam" id="PF07516">
    <property type="entry name" value="SecA_SW"/>
    <property type="match status" value="1"/>
</dbReference>
<dbReference type="PRINTS" id="PR00906">
    <property type="entry name" value="SECA"/>
</dbReference>
<dbReference type="SMART" id="SM00957">
    <property type="entry name" value="SecA_DEAD"/>
    <property type="match status" value="1"/>
</dbReference>
<dbReference type="SMART" id="SM00958">
    <property type="entry name" value="SecA_PP_bind"/>
    <property type="match status" value="1"/>
</dbReference>
<dbReference type="SUPFAM" id="SSF81886">
    <property type="entry name" value="Helical scaffold and wing domains of SecA"/>
    <property type="match status" value="1"/>
</dbReference>
<dbReference type="SUPFAM" id="SSF52540">
    <property type="entry name" value="P-loop containing nucleoside triphosphate hydrolases"/>
    <property type="match status" value="2"/>
</dbReference>
<dbReference type="SUPFAM" id="SSF81767">
    <property type="entry name" value="Pre-protein crosslinking domain of SecA"/>
    <property type="match status" value="1"/>
</dbReference>
<dbReference type="PROSITE" id="PS01312">
    <property type="entry name" value="SECA"/>
    <property type="match status" value="1"/>
</dbReference>
<dbReference type="PROSITE" id="PS51196">
    <property type="entry name" value="SECA_MOTOR_DEAD"/>
    <property type="match status" value="1"/>
</dbReference>
<protein>
    <recommendedName>
        <fullName evidence="1">Protein translocase subunit SecA</fullName>
        <ecNumber evidence="1">7.4.2.8</ecNumber>
    </recommendedName>
</protein>
<name>SECA_STRP3</name>
<comment type="function">
    <text evidence="1">Part of the Sec protein translocase complex. Interacts with the SecYEG preprotein conducting channel. Has a central role in coupling the hydrolysis of ATP to the transfer of proteins into and across the cell membrane, serving as an ATP-driven molecular motor driving the stepwise translocation of polypeptide chains across the membrane.</text>
</comment>
<comment type="catalytic activity">
    <reaction evidence="1">
        <text>ATP + H2O + cellular proteinSide 1 = ADP + phosphate + cellular proteinSide 2.</text>
        <dbReference type="EC" id="7.4.2.8"/>
    </reaction>
</comment>
<comment type="cofactor">
    <cofactor evidence="1">
        <name>Zn(2+)</name>
        <dbReference type="ChEBI" id="CHEBI:29105"/>
    </cofactor>
    <text evidence="1">May bind 1 zinc ion per subunit.</text>
</comment>
<comment type="subunit">
    <text evidence="1">Monomer and homodimer. Part of the essential Sec protein translocation apparatus which comprises SecA, SecYEG and auxiliary proteins SecDF. Other proteins may also be involved.</text>
</comment>
<comment type="subcellular location">
    <subcellularLocation>
        <location evidence="1">Cell membrane</location>
        <topology evidence="1">Peripheral membrane protein</topology>
        <orientation evidence="1">Cytoplasmic side</orientation>
    </subcellularLocation>
    <subcellularLocation>
        <location evidence="1">Cytoplasm</location>
    </subcellularLocation>
    <text evidence="1">Distribution is 50-50.</text>
</comment>
<comment type="similarity">
    <text evidence="1">Belongs to the SecA family.</text>
</comment>
<gene>
    <name evidence="1" type="primary">secA</name>
    <name type="ordered locus">SpyM3_1565</name>
</gene>